<keyword id="KW-0067">ATP-binding</keyword>
<keyword id="KW-0520">NAD</keyword>
<keyword id="KW-0547">Nucleotide-binding</keyword>
<keyword id="KW-0548">Nucleotidyltransferase</keyword>
<keyword id="KW-0662">Pyridine nucleotide biosynthesis</keyword>
<keyword id="KW-0808">Transferase</keyword>
<evidence type="ECO:0000255" key="1">
    <source>
        <dbReference type="HAMAP-Rule" id="MF_00244"/>
    </source>
</evidence>
<reference key="1">
    <citation type="journal article" date="2008" name="PLoS Genet.">
        <title>Complete genome sequence of the N2-fixing broad host range endophyte Klebsiella pneumoniae 342 and virulence predictions verified in mice.</title>
        <authorList>
            <person name="Fouts D.E."/>
            <person name="Tyler H.L."/>
            <person name="DeBoy R.T."/>
            <person name="Daugherty S."/>
            <person name="Ren Q."/>
            <person name="Badger J.H."/>
            <person name="Durkin A.S."/>
            <person name="Huot H."/>
            <person name="Shrivastava S."/>
            <person name="Kothari S."/>
            <person name="Dodson R.J."/>
            <person name="Mohamoud Y."/>
            <person name="Khouri H."/>
            <person name="Roesch L.F.W."/>
            <person name="Krogfelt K.A."/>
            <person name="Struve C."/>
            <person name="Triplett E.W."/>
            <person name="Methe B.A."/>
        </authorList>
    </citation>
    <scope>NUCLEOTIDE SEQUENCE [LARGE SCALE GENOMIC DNA]</scope>
    <source>
        <strain>342</strain>
    </source>
</reference>
<protein>
    <recommendedName>
        <fullName evidence="1">Probable nicotinate-nucleotide adenylyltransferase</fullName>
        <ecNumber evidence="1">2.7.7.18</ecNumber>
    </recommendedName>
    <alternativeName>
        <fullName evidence="1">Deamido-NAD(+) diphosphorylase</fullName>
    </alternativeName>
    <alternativeName>
        <fullName evidence="1">Deamido-NAD(+) pyrophosphorylase</fullName>
    </alternativeName>
    <alternativeName>
        <fullName evidence="1">Nicotinate mononucleotide adenylyltransferase</fullName>
        <shortName evidence="1">NaMN adenylyltransferase</shortName>
    </alternativeName>
</protein>
<comment type="function">
    <text evidence="1">Catalyzes the reversible adenylation of nicotinate mononucleotide (NaMN) to nicotinic acid adenine dinucleotide (NaAD).</text>
</comment>
<comment type="catalytic activity">
    <reaction evidence="1">
        <text>nicotinate beta-D-ribonucleotide + ATP + H(+) = deamido-NAD(+) + diphosphate</text>
        <dbReference type="Rhea" id="RHEA:22860"/>
        <dbReference type="ChEBI" id="CHEBI:15378"/>
        <dbReference type="ChEBI" id="CHEBI:30616"/>
        <dbReference type="ChEBI" id="CHEBI:33019"/>
        <dbReference type="ChEBI" id="CHEBI:57502"/>
        <dbReference type="ChEBI" id="CHEBI:58437"/>
        <dbReference type="EC" id="2.7.7.18"/>
    </reaction>
</comment>
<comment type="pathway">
    <text evidence="1">Cofactor biosynthesis; NAD(+) biosynthesis; deamido-NAD(+) from nicotinate D-ribonucleotide: step 1/1.</text>
</comment>
<comment type="similarity">
    <text evidence="1">Belongs to the NadD family.</text>
</comment>
<accession>B5XZR5</accession>
<organism>
    <name type="scientific">Klebsiella pneumoniae (strain 342)</name>
    <dbReference type="NCBI Taxonomy" id="507522"/>
    <lineage>
        <taxon>Bacteria</taxon>
        <taxon>Pseudomonadati</taxon>
        <taxon>Pseudomonadota</taxon>
        <taxon>Gammaproteobacteria</taxon>
        <taxon>Enterobacterales</taxon>
        <taxon>Enterobacteriaceae</taxon>
        <taxon>Klebsiella/Raoultella group</taxon>
        <taxon>Klebsiella</taxon>
        <taxon>Klebsiella pneumoniae complex</taxon>
    </lineage>
</organism>
<dbReference type="EC" id="2.7.7.18" evidence="1"/>
<dbReference type="EMBL" id="CP000964">
    <property type="protein sequence ID" value="ACI08071.1"/>
    <property type="molecule type" value="Genomic_DNA"/>
</dbReference>
<dbReference type="SMR" id="B5XZR5"/>
<dbReference type="KEGG" id="kpe:KPK_3902"/>
<dbReference type="HOGENOM" id="CLU_069765_0_0_6"/>
<dbReference type="UniPathway" id="UPA00253">
    <property type="reaction ID" value="UER00332"/>
</dbReference>
<dbReference type="Proteomes" id="UP000001734">
    <property type="component" value="Chromosome"/>
</dbReference>
<dbReference type="GO" id="GO:0005524">
    <property type="term" value="F:ATP binding"/>
    <property type="evidence" value="ECO:0007669"/>
    <property type="project" value="UniProtKB-KW"/>
</dbReference>
<dbReference type="GO" id="GO:0004515">
    <property type="term" value="F:nicotinate-nucleotide adenylyltransferase activity"/>
    <property type="evidence" value="ECO:0007669"/>
    <property type="project" value="UniProtKB-UniRule"/>
</dbReference>
<dbReference type="GO" id="GO:0009435">
    <property type="term" value="P:NAD biosynthetic process"/>
    <property type="evidence" value="ECO:0007669"/>
    <property type="project" value="UniProtKB-UniRule"/>
</dbReference>
<dbReference type="CDD" id="cd02165">
    <property type="entry name" value="NMNAT"/>
    <property type="match status" value="1"/>
</dbReference>
<dbReference type="FunFam" id="3.40.50.620:FF:000039">
    <property type="entry name" value="Probable nicotinate-nucleotide adenylyltransferase"/>
    <property type="match status" value="1"/>
</dbReference>
<dbReference type="Gene3D" id="3.40.50.620">
    <property type="entry name" value="HUPs"/>
    <property type="match status" value="1"/>
</dbReference>
<dbReference type="HAMAP" id="MF_00244">
    <property type="entry name" value="NaMN_adenylyltr"/>
    <property type="match status" value="1"/>
</dbReference>
<dbReference type="InterPro" id="IPR004821">
    <property type="entry name" value="Cyt_trans-like"/>
</dbReference>
<dbReference type="InterPro" id="IPR005248">
    <property type="entry name" value="NadD/NMNAT"/>
</dbReference>
<dbReference type="InterPro" id="IPR014729">
    <property type="entry name" value="Rossmann-like_a/b/a_fold"/>
</dbReference>
<dbReference type="NCBIfam" id="TIGR00125">
    <property type="entry name" value="cyt_tran_rel"/>
    <property type="match status" value="1"/>
</dbReference>
<dbReference type="NCBIfam" id="TIGR00482">
    <property type="entry name" value="nicotinate (nicotinamide) nucleotide adenylyltransferase"/>
    <property type="match status" value="1"/>
</dbReference>
<dbReference type="NCBIfam" id="NF000839">
    <property type="entry name" value="PRK00071.1-1"/>
    <property type="match status" value="1"/>
</dbReference>
<dbReference type="PANTHER" id="PTHR39321">
    <property type="entry name" value="NICOTINATE-NUCLEOTIDE ADENYLYLTRANSFERASE-RELATED"/>
    <property type="match status" value="1"/>
</dbReference>
<dbReference type="PANTHER" id="PTHR39321:SF3">
    <property type="entry name" value="PHOSPHOPANTETHEINE ADENYLYLTRANSFERASE"/>
    <property type="match status" value="1"/>
</dbReference>
<dbReference type="Pfam" id="PF01467">
    <property type="entry name" value="CTP_transf_like"/>
    <property type="match status" value="1"/>
</dbReference>
<dbReference type="SUPFAM" id="SSF52374">
    <property type="entry name" value="Nucleotidylyl transferase"/>
    <property type="match status" value="1"/>
</dbReference>
<gene>
    <name evidence="1" type="primary">nadD</name>
    <name type="ordered locus">KPK_3902</name>
</gene>
<name>NADD_KLEP3</name>
<feature type="chain" id="PRO_1000100783" description="Probable nicotinate-nucleotide adenylyltransferase">
    <location>
        <begin position="1"/>
        <end position="216"/>
    </location>
</feature>
<sequence length="216" mass="24780">MVDMTQLQAIYGGTFDPVHYGHLKPVEILANQIGLSKVIIMPNNVPPHRPQPEATSAQRVHMLKLAIADKPLFTLDERELQRDTPSWTADTLQAWRQEQGAEKPLAFIIGQDSLLTFPTWHRYETILDNVHLIVCRRPGYPLTMAHDADQQWLDRHLTHDVERLHNRPAGAIYLAETPWFDISATIIRQRLERGESCAEMLPATVLDYIREQGLYC</sequence>
<proteinExistence type="inferred from homology"/>